<sequence>MSQSLIVALDFPGKQDVEQFLRHFEGEELFVKVGMELFYKEGPAIITYLKEKGHKIFLDLKLHDIPNTVKSAMRSLASLDVDMVNVHAAGGSSMMKAAIEGLEEGKQEGKERPICIAVTQLTSTSETMMKKEIGIEKTLEEAVAHYAKLTKESGLDGVVCSTLEVPKLREVCGSEFVTVTPGIRLASDDVNDQVRVATPKRARELGSSYIVVGRSITKAENPLEAYKTVKQQWEGVTV</sequence>
<organism>
    <name type="scientific">Bacillus cereus (strain AH820)</name>
    <dbReference type="NCBI Taxonomy" id="405535"/>
    <lineage>
        <taxon>Bacteria</taxon>
        <taxon>Bacillati</taxon>
        <taxon>Bacillota</taxon>
        <taxon>Bacilli</taxon>
        <taxon>Bacillales</taxon>
        <taxon>Bacillaceae</taxon>
        <taxon>Bacillus</taxon>
        <taxon>Bacillus cereus group</taxon>
    </lineage>
</organism>
<protein>
    <recommendedName>
        <fullName evidence="1">Orotidine 5'-phosphate decarboxylase</fullName>
        <ecNumber evidence="1">4.1.1.23</ecNumber>
    </recommendedName>
    <alternativeName>
        <fullName evidence="1">OMP decarboxylase</fullName>
        <shortName evidence="1">OMPDCase</shortName>
        <shortName evidence="1">OMPdecase</shortName>
    </alternativeName>
</protein>
<gene>
    <name evidence="1" type="primary">pyrF</name>
    <name type="ordered locus">BCAH820_3897</name>
</gene>
<evidence type="ECO:0000255" key="1">
    <source>
        <dbReference type="HAMAP-Rule" id="MF_01200"/>
    </source>
</evidence>
<feature type="chain" id="PRO_1000138511" description="Orotidine 5'-phosphate decarboxylase">
    <location>
        <begin position="1"/>
        <end position="238"/>
    </location>
</feature>
<feature type="active site" description="Proton donor" evidence="1">
    <location>
        <position position="61"/>
    </location>
</feature>
<feature type="binding site" evidence="1">
    <location>
        <position position="10"/>
    </location>
    <ligand>
        <name>substrate</name>
    </ligand>
</feature>
<feature type="binding site" evidence="1">
    <location>
        <position position="32"/>
    </location>
    <ligand>
        <name>substrate</name>
    </ligand>
</feature>
<feature type="binding site" evidence="1">
    <location>
        <begin position="59"/>
        <end position="68"/>
    </location>
    <ligand>
        <name>substrate</name>
    </ligand>
</feature>
<feature type="binding site" evidence="1">
    <location>
        <position position="122"/>
    </location>
    <ligand>
        <name>substrate</name>
    </ligand>
</feature>
<feature type="binding site" evidence="1">
    <location>
        <position position="184"/>
    </location>
    <ligand>
        <name>substrate</name>
    </ligand>
</feature>
<feature type="binding site" evidence="1">
    <location>
        <position position="193"/>
    </location>
    <ligand>
        <name>substrate</name>
    </ligand>
</feature>
<feature type="binding site" evidence="1">
    <location>
        <position position="213"/>
    </location>
    <ligand>
        <name>substrate</name>
    </ligand>
</feature>
<feature type="binding site" evidence="1">
    <location>
        <position position="214"/>
    </location>
    <ligand>
        <name>substrate</name>
    </ligand>
</feature>
<keyword id="KW-0210">Decarboxylase</keyword>
<keyword id="KW-0456">Lyase</keyword>
<keyword id="KW-0665">Pyrimidine biosynthesis</keyword>
<name>PYRF_BACC0</name>
<reference key="1">
    <citation type="submission" date="2008-10" db="EMBL/GenBank/DDBJ databases">
        <title>Genome sequence of Bacillus cereus AH820.</title>
        <authorList>
            <person name="Dodson R.J."/>
            <person name="Durkin A.S."/>
            <person name="Rosovitz M.J."/>
            <person name="Rasko D.A."/>
            <person name="Hoffmaster A."/>
            <person name="Ravel J."/>
            <person name="Sutton G."/>
        </authorList>
    </citation>
    <scope>NUCLEOTIDE SEQUENCE [LARGE SCALE GENOMIC DNA]</scope>
    <source>
        <strain>AH820</strain>
    </source>
</reference>
<accession>B7JJX0</accession>
<dbReference type="EC" id="4.1.1.23" evidence="1"/>
<dbReference type="EMBL" id="CP001283">
    <property type="protein sequence ID" value="ACK89834.1"/>
    <property type="molecule type" value="Genomic_DNA"/>
</dbReference>
<dbReference type="RefSeq" id="WP_000083501.1">
    <property type="nucleotide sequence ID" value="NC_011773.1"/>
</dbReference>
<dbReference type="SMR" id="B7JJX0"/>
<dbReference type="KEGG" id="bcu:BCAH820_3897"/>
<dbReference type="HOGENOM" id="CLU_067069_1_1_9"/>
<dbReference type="UniPathway" id="UPA00070">
    <property type="reaction ID" value="UER00120"/>
</dbReference>
<dbReference type="Proteomes" id="UP000001363">
    <property type="component" value="Chromosome"/>
</dbReference>
<dbReference type="GO" id="GO:0005829">
    <property type="term" value="C:cytosol"/>
    <property type="evidence" value="ECO:0007669"/>
    <property type="project" value="TreeGrafter"/>
</dbReference>
<dbReference type="GO" id="GO:0004590">
    <property type="term" value="F:orotidine-5'-phosphate decarboxylase activity"/>
    <property type="evidence" value="ECO:0007669"/>
    <property type="project" value="UniProtKB-UniRule"/>
</dbReference>
<dbReference type="GO" id="GO:0006207">
    <property type="term" value="P:'de novo' pyrimidine nucleobase biosynthetic process"/>
    <property type="evidence" value="ECO:0007669"/>
    <property type="project" value="InterPro"/>
</dbReference>
<dbReference type="GO" id="GO:0044205">
    <property type="term" value="P:'de novo' UMP biosynthetic process"/>
    <property type="evidence" value="ECO:0007669"/>
    <property type="project" value="UniProtKB-UniRule"/>
</dbReference>
<dbReference type="CDD" id="cd04725">
    <property type="entry name" value="OMP_decarboxylase_like"/>
    <property type="match status" value="1"/>
</dbReference>
<dbReference type="FunFam" id="3.20.20.70:FF:000015">
    <property type="entry name" value="Orotidine 5'-phosphate decarboxylase"/>
    <property type="match status" value="1"/>
</dbReference>
<dbReference type="Gene3D" id="3.20.20.70">
    <property type="entry name" value="Aldolase class I"/>
    <property type="match status" value="1"/>
</dbReference>
<dbReference type="HAMAP" id="MF_01200_B">
    <property type="entry name" value="OMPdecase_type1_B"/>
    <property type="match status" value="1"/>
</dbReference>
<dbReference type="InterPro" id="IPR013785">
    <property type="entry name" value="Aldolase_TIM"/>
</dbReference>
<dbReference type="InterPro" id="IPR014732">
    <property type="entry name" value="OMPdecase"/>
</dbReference>
<dbReference type="InterPro" id="IPR018089">
    <property type="entry name" value="OMPdecase_AS"/>
</dbReference>
<dbReference type="InterPro" id="IPR047596">
    <property type="entry name" value="OMPdecase_bac"/>
</dbReference>
<dbReference type="InterPro" id="IPR001754">
    <property type="entry name" value="OMPdeCOase_dom"/>
</dbReference>
<dbReference type="InterPro" id="IPR011060">
    <property type="entry name" value="RibuloseP-bd_barrel"/>
</dbReference>
<dbReference type="NCBIfam" id="NF001273">
    <property type="entry name" value="PRK00230.1"/>
    <property type="match status" value="1"/>
</dbReference>
<dbReference type="NCBIfam" id="TIGR01740">
    <property type="entry name" value="pyrF"/>
    <property type="match status" value="1"/>
</dbReference>
<dbReference type="PANTHER" id="PTHR32119">
    <property type="entry name" value="OROTIDINE 5'-PHOSPHATE DECARBOXYLASE"/>
    <property type="match status" value="1"/>
</dbReference>
<dbReference type="PANTHER" id="PTHR32119:SF2">
    <property type="entry name" value="OROTIDINE 5'-PHOSPHATE DECARBOXYLASE"/>
    <property type="match status" value="1"/>
</dbReference>
<dbReference type="Pfam" id="PF00215">
    <property type="entry name" value="OMPdecase"/>
    <property type="match status" value="1"/>
</dbReference>
<dbReference type="SMART" id="SM00934">
    <property type="entry name" value="OMPdecase"/>
    <property type="match status" value="1"/>
</dbReference>
<dbReference type="SUPFAM" id="SSF51366">
    <property type="entry name" value="Ribulose-phoshate binding barrel"/>
    <property type="match status" value="1"/>
</dbReference>
<dbReference type="PROSITE" id="PS00156">
    <property type="entry name" value="OMPDECASE"/>
    <property type="match status" value="1"/>
</dbReference>
<proteinExistence type="inferred from homology"/>
<comment type="function">
    <text evidence="1">Catalyzes the decarboxylation of orotidine 5'-monophosphate (OMP) to uridine 5'-monophosphate (UMP).</text>
</comment>
<comment type="catalytic activity">
    <reaction evidence="1">
        <text>orotidine 5'-phosphate + H(+) = UMP + CO2</text>
        <dbReference type="Rhea" id="RHEA:11596"/>
        <dbReference type="ChEBI" id="CHEBI:15378"/>
        <dbReference type="ChEBI" id="CHEBI:16526"/>
        <dbReference type="ChEBI" id="CHEBI:57538"/>
        <dbReference type="ChEBI" id="CHEBI:57865"/>
        <dbReference type="EC" id="4.1.1.23"/>
    </reaction>
</comment>
<comment type="pathway">
    <text evidence="1">Pyrimidine metabolism; UMP biosynthesis via de novo pathway; UMP from orotate: step 2/2.</text>
</comment>
<comment type="subunit">
    <text evidence="1">Homodimer.</text>
</comment>
<comment type="similarity">
    <text evidence="1">Belongs to the OMP decarboxylase family. Type 1 subfamily.</text>
</comment>